<reference key="1">
    <citation type="journal article" date="2016" name="Genome Announc.">
        <title>Draft genome sequences of fungus Aspergillus calidoustus.</title>
        <authorList>
            <person name="Horn F."/>
            <person name="Linde J."/>
            <person name="Mattern D.J."/>
            <person name="Walther G."/>
            <person name="Guthke R."/>
            <person name="Scherlach K."/>
            <person name="Martin K."/>
            <person name="Brakhage A.A."/>
            <person name="Petzke L."/>
            <person name="Valiante V."/>
        </authorList>
    </citation>
    <scope>NUCLEOTIDE SEQUENCE [LARGE SCALE GENOMIC DNA]</scope>
    <source>
        <strain>SF006504</strain>
    </source>
</reference>
<reference key="2">
    <citation type="journal article" date="2017" name="ACS Chem. Biol.">
        <title>Discovery of an Extended Austinoid Biosynthetic Pathway in Aspergillus calidoustus.</title>
        <authorList>
            <person name="Valiante V."/>
            <person name="Mattern D.J."/>
            <person name="Schueffler A."/>
            <person name="Horn F."/>
            <person name="Walther G."/>
            <person name="Scherlach K."/>
            <person name="Petzke L."/>
            <person name="Dickhaut J."/>
            <person name="Guthke R."/>
            <person name="Hertweck C."/>
            <person name="Nett M."/>
            <person name="Thines E."/>
            <person name="Brakhage A.A."/>
        </authorList>
    </citation>
    <scope>FUNCTION</scope>
    <scope>CATALYTIC ACTIVITY</scope>
    <scope>DISRUPTION PHENOTYPE</scope>
    <scope>PATHWAY</scope>
</reference>
<reference key="3">
    <citation type="journal article" date="2017" name="ACS Chem. Biol.">
        <title>Rewiring of the austinoid biosynthetic pathway in filamentous fungi.</title>
        <authorList>
            <person name="Mattern D.J."/>
            <person name="Valiante V."/>
            <person name="Horn F."/>
            <person name="Petzke L."/>
            <person name="Brakhage A.A."/>
        </authorList>
    </citation>
    <scope>FUNCTION</scope>
</reference>
<sequence>MEVVRYFTSNQKQPPATGPKDSIVQLPDIPPVYECNVEVALRFDSVLDPEKLQQSLKRLLEIGNWRQLGGRLRRRDTNSDACGYDLHVPVEFTTERPAFIYKTLESPAAVDEHPVACKMPQPTDPNKILFYNVRDALTPSMTRTHHPRKAQEWAESDLPPLSFEQLNFRDGTIILLLFPHILMDATGYGLFLKAWTCVLQGRMDDVPQCCGFSESITDMLCHKTPAESFTWHNHLLKGLDRLRFTARLLWENICGKEERIIRVPGKFITQTRDKTLADLSTSQDSPFVSHSDVLVAWFVRVVLASLNPQHQRTLVLTNAFDIRHMLPPERAYLQNSVFLAHTMLPVGEVVSNPASFLANEIRRSLVRERTEEQVQARCAWAKDVGIMPLLGSSDMLLCNVSNWSKGGLLDLDFGPAAITQRPGPCVPSSILNCSQMRGVTPEYGIILGKDSQDGWWMQWRLSKFCWAMIERELDTINQTR</sequence>
<evidence type="ECO:0000250" key="1">
    <source>
        <dbReference type="UniProtKB" id="Q5ATJ7"/>
    </source>
</evidence>
<evidence type="ECO:0000250" key="2">
    <source>
        <dbReference type="UniProtKB" id="Q70PR7"/>
    </source>
</evidence>
<evidence type="ECO:0000269" key="3">
    <source>
    </source>
</evidence>
<evidence type="ECO:0000269" key="4">
    <source>
    </source>
</evidence>
<evidence type="ECO:0000303" key="5">
    <source>
    </source>
</evidence>
<evidence type="ECO:0000305" key="6"/>
<evidence type="ECO:0000305" key="7">
    <source>
    </source>
</evidence>
<organism>
    <name type="scientific">Aspergillus calidoustus</name>
    <dbReference type="NCBI Taxonomy" id="454130"/>
    <lineage>
        <taxon>Eukaryota</taxon>
        <taxon>Fungi</taxon>
        <taxon>Dikarya</taxon>
        <taxon>Ascomycota</taxon>
        <taxon>Pezizomycotina</taxon>
        <taxon>Eurotiomycetes</taxon>
        <taxon>Eurotiomycetidae</taxon>
        <taxon>Eurotiales</taxon>
        <taxon>Aspergillaceae</taxon>
        <taxon>Aspergillus</taxon>
        <taxon>Aspergillus subgen. Nidulantes</taxon>
    </lineage>
</organism>
<dbReference type="EC" id="2.3.1.-" evidence="3"/>
<dbReference type="EMBL" id="CDMC01000024">
    <property type="protein sequence ID" value="CEL11255.1"/>
    <property type="molecule type" value="Genomic_DNA"/>
</dbReference>
<dbReference type="SMR" id="A0A0U5GIM7"/>
<dbReference type="OMA" id="CVIPTHH"/>
<dbReference type="OrthoDB" id="21502at2759"/>
<dbReference type="UniPathway" id="UPA00213"/>
<dbReference type="Proteomes" id="UP000054771">
    <property type="component" value="Unassembled WGS sequence"/>
</dbReference>
<dbReference type="GO" id="GO:0016747">
    <property type="term" value="F:acyltransferase activity, transferring groups other than amino-acyl groups"/>
    <property type="evidence" value="ECO:0007669"/>
    <property type="project" value="TreeGrafter"/>
</dbReference>
<dbReference type="GO" id="GO:0016114">
    <property type="term" value="P:terpenoid biosynthetic process"/>
    <property type="evidence" value="ECO:0007669"/>
    <property type="project" value="UniProtKB-UniPathway"/>
</dbReference>
<dbReference type="Gene3D" id="3.30.559.10">
    <property type="entry name" value="Chloramphenicol acetyltransferase-like domain"/>
    <property type="match status" value="2"/>
</dbReference>
<dbReference type="InterPro" id="IPR023213">
    <property type="entry name" value="CAT-like_dom_sf"/>
</dbReference>
<dbReference type="InterPro" id="IPR050317">
    <property type="entry name" value="Plant_Fungal_Acyltransferase"/>
</dbReference>
<dbReference type="PANTHER" id="PTHR31642:SF310">
    <property type="entry name" value="FATTY ALCOHOL:CAFFEOYL-COA ACYLTRANSFERASE"/>
    <property type="match status" value="1"/>
</dbReference>
<dbReference type="PANTHER" id="PTHR31642">
    <property type="entry name" value="TRICHOTHECENE 3-O-ACETYLTRANSFERASE"/>
    <property type="match status" value="1"/>
</dbReference>
<dbReference type="Pfam" id="PF02458">
    <property type="entry name" value="Transferase"/>
    <property type="match status" value="1"/>
</dbReference>
<accession>A0A0U5GIM7</accession>
<keyword id="KW-0012">Acyltransferase</keyword>
<keyword id="KW-1185">Reference proteome</keyword>
<keyword id="KW-0808">Transferase</keyword>
<name>AUSP_ASPCI</name>
<comment type="function">
    <text evidence="1 3 4">O-acyltransferase; part of the gene cluster that mediates the biosynthesis of calidodehydroaustin, a fungal meroterpenoid (PubMed:28233494, PubMed:29076725). The first step of the pathway is the synthesis of 3,5-dimethylorsellinic acid by the polyketide synthase ausA (PubMed:28233494). 3,5-dimethylorsellinic acid is then prenylated by the polyprenyl transferase ausN (PubMed:28233494). Further epoxidation by the FAD-dependent monooxygenase ausM and cyclization by the probable terpene cyclase ausL lead to the formation of protoaustinoid A (By similarity). Protoaustinoid A is then oxidized to spiro-lactone preaustinoid A3 by the combined action of the FAD-binding monooxygenases ausB and ausC, and the dioxygenase ausE (By similarity). Acid-catalyzed keto-rearrangement and ring contraction of the tetraketide portion of preaustinoid A3 by ausJ lead to the formation of preaustinoid A4 (By similarity). The aldo-keto reductase ausK, with the help of ausH, is involved in the next step by transforming preaustinoid A4 into isoaustinone which is in turn hydroxylated by the P450 monooxygenase ausI to form austinolide (By similarity). The cytochrome P450 monooxygenase ausG modifies austinolide to austinol (By similarity). Austinol is further acetylated to austin by the O-acetyltransferase ausP, which spontaneously changes to dehydroaustin (PubMed:28233494). The cytochrome P450 monooxygenase ausR then converts dehydroaustin is into 7-dehydrodehydroaustin (PubMed:28233494). The hydroxylation catalyzed by ausR permits the O-acetyltransferase ausQ to add an additional acetyl group to the molecule, leading to the formation of acetoxydehydroaustin (PubMed:28233494). The short chain dehydrogenase ausT catalyzes the reduction of the double bond present between carbon atoms 1 and 2 to convert 7-dehydrodehydroaustin into 1,2-dihydro-7-hydroxydehydroaustin (PubMed:28233494). AusQ catalyzes not only an acetylation reaction but also the addition of the PKS ausV diketide product to 1,2-dihydro-7-hydroxydehydroaustin, forming precalidodehydroaustin (PubMed:28233494). Finally, the iron/alpha-ketoglutarate-dependent dioxygenase converts precalidodehydroaustin into calidodehydroaustin (PubMed:28233494).</text>
</comment>
<comment type="pathway">
    <text evidence="3">Secondary metabolite biosynthesis; terpenoid biosynthesis.</text>
</comment>
<comment type="subunit">
    <text evidence="2">Monomer.</text>
</comment>
<comment type="disruption phenotype">
    <text evidence="3">Leads to complete loss of production of austin.</text>
</comment>
<comment type="miscellaneous">
    <text evidence="7">In A.calidoustus, the austinoid gene cluster lies on a contiguous DNA region, while clusters from E.nidulans and P.brasilianum are split in their respective genomes. Genetic rearrangements provoked variability among the clusters and E.nidulans produces the least number of austionoid derivatives with the end products austinol and dehydroaustinol, while P.brasilianum can produce until acetoxydehydroaustin, and A.calidoustus produces the highest number of identified derivatives.</text>
</comment>
<comment type="similarity">
    <text evidence="6">Belongs to the plant acyltransferase family.</text>
</comment>
<feature type="chain" id="PRO_0000453865" description="O-acyltransferase ausP">
    <location>
        <begin position="1"/>
        <end position="480"/>
    </location>
</feature>
<feature type="active site" description="Proton acceptor" evidence="2">
    <location>
        <position position="180"/>
    </location>
</feature>
<feature type="active site" description="Proton acceptor" evidence="2">
    <location>
        <position position="412"/>
    </location>
</feature>
<protein>
    <recommendedName>
        <fullName evidence="5">O-acyltransferase ausP</fullName>
        <ecNumber evidence="3">2.3.1.-</ecNumber>
    </recommendedName>
    <alternativeName>
        <fullName evidence="5">Austinoid biosynthesis cluster protein P</fullName>
    </alternativeName>
</protein>
<gene>
    <name evidence="5" type="primary">ausP</name>
    <name type="ORF">ASPCAL14358</name>
</gene>
<proteinExistence type="evidence at protein level"/>